<dbReference type="EMBL" id="AB003328">
    <property type="protein sequence ID" value="BAA81886.1"/>
    <property type="molecule type" value="mRNA"/>
</dbReference>
<dbReference type="EMBL" id="AY332476">
    <property type="protein sequence ID" value="AAQ01162.1"/>
    <property type="molecule type" value="mRNA"/>
</dbReference>
<dbReference type="EMBL" id="AY551914">
    <property type="protein sequence ID" value="AAS59820.1"/>
    <property type="molecule type" value="mRNA"/>
</dbReference>
<dbReference type="EMBL" id="AC098695">
    <property type="protein sequence ID" value="AAN74833.1"/>
    <property type="molecule type" value="Genomic_DNA"/>
</dbReference>
<dbReference type="EMBL" id="AP008209">
    <property type="protein sequence ID" value="BAF10715.1"/>
    <property type="molecule type" value="Genomic_DNA"/>
</dbReference>
<dbReference type="EMBL" id="AP014959">
    <property type="protein sequence ID" value="BAS82045.1"/>
    <property type="molecule type" value="Genomic_DNA"/>
</dbReference>
<dbReference type="RefSeq" id="XP_015630979.1">
    <property type="nucleotide sequence ID" value="XM_015775493.1"/>
</dbReference>
<dbReference type="SMR" id="Q9XJ60"/>
<dbReference type="BioGRID" id="800482">
    <property type="interactions" value="2"/>
</dbReference>
<dbReference type="FunCoup" id="Q9XJ60">
    <property type="interactions" value="17"/>
</dbReference>
<dbReference type="STRING" id="39947.Q9XJ60"/>
<dbReference type="PaxDb" id="39947-Q9XJ60"/>
<dbReference type="EnsemblPlants" id="Os03t0122600-01">
    <molecule id="Q9XJ60-1"/>
    <property type="protein sequence ID" value="Os03t0122600-01"/>
    <property type="gene ID" value="Os03g0122600"/>
</dbReference>
<dbReference type="EnsemblPlants" id="Os03t0122600-02">
    <molecule id="Q9XJ60-1"/>
    <property type="protein sequence ID" value="Os03t0122600-02"/>
    <property type="gene ID" value="Os03g0122600"/>
</dbReference>
<dbReference type="Gramene" id="Os03t0122600-01">
    <molecule id="Q9XJ60-1"/>
    <property type="protein sequence ID" value="Os03t0122600-01"/>
    <property type="gene ID" value="Os03g0122600"/>
</dbReference>
<dbReference type="Gramene" id="Os03t0122600-02">
    <molecule id="Q9XJ60-1"/>
    <property type="protein sequence ID" value="Os03t0122600-02"/>
    <property type="gene ID" value="Os03g0122600"/>
</dbReference>
<dbReference type="KEGG" id="dosa:Os03g0122600"/>
<dbReference type="eggNOG" id="KOG0014">
    <property type="taxonomic scope" value="Eukaryota"/>
</dbReference>
<dbReference type="HOGENOM" id="CLU_053053_0_4_1"/>
<dbReference type="InParanoid" id="Q9XJ60"/>
<dbReference type="OMA" id="DIRPPVC"/>
<dbReference type="OrthoDB" id="1898716at2759"/>
<dbReference type="PlantReactome" id="R-OSA-8934036">
    <property type="pathway name" value="Long day regulated expression of florigens"/>
</dbReference>
<dbReference type="Proteomes" id="UP000000763">
    <property type="component" value="Chromosome 3"/>
</dbReference>
<dbReference type="Proteomes" id="UP000059680">
    <property type="component" value="Chromosome 3"/>
</dbReference>
<dbReference type="GO" id="GO:0005634">
    <property type="term" value="C:nucleus"/>
    <property type="evidence" value="ECO:0007669"/>
    <property type="project" value="UniProtKB-SubCell"/>
</dbReference>
<dbReference type="GO" id="GO:0000981">
    <property type="term" value="F:DNA-binding transcription factor activity, RNA polymerase II-specific"/>
    <property type="evidence" value="ECO:0000318"/>
    <property type="project" value="GO_Central"/>
</dbReference>
<dbReference type="GO" id="GO:0046983">
    <property type="term" value="F:protein dimerization activity"/>
    <property type="evidence" value="ECO:0007669"/>
    <property type="project" value="InterPro"/>
</dbReference>
<dbReference type="GO" id="GO:0000978">
    <property type="term" value="F:RNA polymerase II cis-regulatory region sequence-specific DNA binding"/>
    <property type="evidence" value="ECO:0000318"/>
    <property type="project" value="GO_Central"/>
</dbReference>
<dbReference type="GO" id="GO:0030154">
    <property type="term" value="P:cell differentiation"/>
    <property type="evidence" value="ECO:0007669"/>
    <property type="project" value="UniProtKB-KW"/>
</dbReference>
<dbReference type="GO" id="GO:0009908">
    <property type="term" value="P:flower development"/>
    <property type="evidence" value="ECO:0007669"/>
    <property type="project" value="UniProtKB-KW"/>
</dbReference>
<dbReference type="GO" id="GO:0045944">
    <property type="term" value="P:positive regulation of transcription by RNA polymerase II"/>
    <property type="evidence" value="ECO:0007669"/>
    <property type="project" value="InterPro"/>
</dbReference>
<dbReference type="GO" id="GO:0006357">
    <property type="term" value="P:regulation of transcription by RNA polymerase II"/>
    <property type="evidence" value="ECO:0000318"/>
    <property type="project" value="GO_Central"/>
</dbReference>
<dbReference type="CDD" id="cd00265">
    <property type="entry name" value="MADS_MEF2_like"/>
    <property type="match status" value="1"/>
</dbReference>
<dbReference type="FunFam" id="3.40.1810.10:FF:000012">
    <property type="entry name" value="MADS-box protein SOC1"/>
    <property type="match status" value="1"/>
</dbReference>
<dbReference type="Gene3D" id="3.40.1810.10">
    <property type="entry name" value="Transcription factor, MADS-box"/>
    <property type="match status" value="1"/>
</dbReference>
<dbReference type="InterPro" id="IPR050142">
    <property type="entry name" value="MADS-box/MEF2_TF"/>
</dbReference>
<dbReference type="InterPro" id="IPR033896">
    <property type="entry name" value="MEF2-like_N"/>
</dbReference>
<dbReference type="InterPro" id="IPR002487">
    <property type="entry name" value="TF_Kbox"/>
</dbReference>
<dbReference type="InterPro" id="IPR002100">
    <property type="entry name" value="TF_MADSbox"/>
</dbReference>
<dbReference type="InterPro" id="IPR036879">
    <property type="entry name" value="TF_MADSbox_sf"/>
</dbReference>
<dbReference type="PANTHER" id="PTHR48019">
    <property type="entry name" value="SERUM RESPONSE FACTOR HOMOLOG"/>
    <property type="match status" value="1"/>
</dbReference>
<dbReference type="Pfam" id="PF01486">
    <property type="entry name" value="K-box"/>
    <property type="match status" value="1"/>
</dbReference>
<dbReference type="Pfam" id="PF00319">
    <property type="entry name" value="SRF-TF"/>
    <property type="match status" value="1"/>
</dbReference>
<dbReference type="PRINTS" id="PR00404">
    <property type="entry name" value="MADSDOMAIN"/>
</dbReference>
<dbReference type="SMART" id="SM00432">
    <property type="entry name" value="MADS"/>
    <property type="match status" value="1"/>
</dbReference>
<dbReference type="SUPFAM" id="SSF55455">
    <property type="entry name" value="SRF-like"/>
    <property type="match status" value="1"/>
</dbReference>
<dbReference type="PROSITE" id="PS51297">
    <property type="entry name" value="K_BOX"/>
    <property type="match status" value="1"/>
</dbReference>
<dbReference type="PROSITE" id="PS00350">
    <property type="entry name" value="MADS_BOX_1"/>
    <property type="match status" value="1"/>
</dbReference>
<dbReference type="PROSITE" id="PS50066">
    <property type="entry name" value="MADS_BOX_2"/>
    <property type="match status" value="1"/>
</dbReference>
<gene>
    <name type="primary">MADS50</name>
    <name type="synonym">AGL20</name>
    <name type="synonym">SOC1</name>
    <name type="ordered locus">Os03g0122600</name>
    <name type="ordered locus">LOC_Os03g03070</name>
    <name type="ORF">OJ1126B12.8</name>
</gene>
<keyword id="KW-0010">Activator</keyword>
<keyword id="KW-0025">Alternative splicing</keyword>
<keyword id="KW-0217">Developmental protein</keyword>
<keyword id="KW-0221">Differentiation</keyword>
<keyword id="KW-0238">DNA-binding</keyword>
<keyword id="KW-0287">Flowering</keyword>
<keyword id="KW-0539">Nucleus</keyword>
<keyword id="KW-1185">Reference proteome</keyword>
<keyword id="KW-0804">Transcription</keyword>
<keyword id="KW-0805">Transcription regulation</keyword>
<proteinExistence type="evidence at transcript level"/>
<organism>
    <name type="scientific">Oryza sativa subsp. japonica</name>
    <name type="common">Rice</name>
    <dbReference type="NCBI Taxonomy" id="39947"/>
    <lineage>
        <taxon>Eukaryota</taxon>
        <taxon>Viridiplantae</taxon>
        <taxon>Streptophyta</taxon>
        <taxon>Embryophyta</taxon>
        <taxon>Tracheophyta</taxon>
        <taxon>Spermatophyta</taxon>
        <taxon>Magnoliopsida</taxon>
        <taxon>Liliopsida</taxon>
        <taxon>Poales</taxon>
        <taxon>Poaceae</taxon>
        <taxon>BOP clade</taxon>
        <taxon>Oryzoideae</taxon>
        <taxon>Oryzeae</taxon>
        <taxon>Oryzinae</taxon>
        <taxon>Oryza</taxon>
        <taxon>Oryza sativa</taxon>
    </lineage>
</organism>
<accession>Q9XJ60</accession>
<accession>Q0DVM3</accession>
<accession>Q7XB97</accession>
<accession>Q8H8H3</accession>
<sequence>MVRGKTQMKRIENPTSRQVTFSKRRNGLLKKAFELSVLCDAEVALIVFSPRGKLYEFASASTQKTIERYRTYTKENIGNKTVQQDIEQVKADADGLAKKLEALETYKRKLLGEKLDECSIEELHSLEVKLERSLISIRGRKTKLLEEQVAKLREKEMKLRKDNEELREKCKNQPPLSAPLTVRAEDENPDRNINTTNDNMDVETELFIGLPGRSRSSGGAAEDSQAMPHS</sequence>
<protein>
    <recommendedName>
        <fullName>MADS-box transcription factor 50</fullName>
        <shortName>OsMADS50</shortName>
    </recommendedName>
    <alternativeName>
        <fullName>Protein AGAMOUS-like 20</fullName>
    </alternativeName>
    <alternativeName>
        <fullName>Protein SUPPRESSOR OF CONSTANS OVEREXPRESSION 1-like</fullName>
        <shortName>OsSOC1</shortName>
    </alternativeName>
    <alternativeName>
        <fullName>RMADS208</fullName>
    </alternativeName>
</protein>
<feature type="chain" id="PRO_0000229916" description="MADS-box transcription factor 50">
    <location>
        <begin position="1"/>
        <end position="230"/>
    </location>
</feature>
<feature type="domain" description="MADS-box" evidence="1">
    <location>
        <begin position="1"/>
        <end position="61"/>
    </location>
</feature>
<feature type="domain" description="K-box" evidence="2">
    <location>
        <begin position="86"/>
        <end position="176"/>
    </location>
</feature>
<feature type="region of interest" description="Disordered" evidence="3">
    <location>
        <begin position="209"/>
        <end position="230"/>
    </location>
</feature>
<feature type="splice variant" id="VSP_017787" description="In isoform 2." evidence="6">
    <location>
        <begin position="1"/>
        <end position="79"/>
    </location>
</feature>
<feature type="splice variant" id="VSP_017788" description="In isoform 2." evidence="6">
    <original>KTVQQDIE</original>
    <variation>MCIVFEIM</variation>
    <location>
        <begin position="80"/>
        <end position="87"/>
    </location>
</feature>
<reference key="1">
    <citation type="journal article" date="1999" name="DNA Res.">
        <title>Isolation and characterization of rice MADS box gene homologues and their RFLP mapping.</title>
        <authorList>
            <person name="Shinozuka Y."/>
            <person name="Kojima S."/>
            <person name="Shomura A."/>
            <person name="Ichimura H."/>
            <person name="Yano M."/>
            <person name="Yamamoto K."/>
            <person name="Sasaki T."/>
        </authorList>
    </citation>
    <scope>NUCLEOTIDE SEQUENCE [MRNA] (ISOFORM 1)</scope>
    <source>
        <strain>cv. Nipponbare</strain>
        <tissue>Shoot</tissue>
    </source>
</reference>
<reference key="2">
    <citation type="submission" date="2004-02" db="EMBL/GenBank/DDBJ databases">
        <title>Isolation and characterization of rice MADS box gene homologs.</title>
        <authorList>
            <person name="Yao Q."/>
            <person name="Peng R."/>
            <person name="Xiong A."/>
        </authorList>
    </citation>
    <scope>NUCLEOTIDE SEQUENCE [MRNA] (ISOFORMS 1 AND 2)</scope>
</reference>
<reference key="3">
    <citation type="journal article" date="2005" name="Genome Res.">
        <title>Sequence, annotation, and analysis of synteny between rice chromosome 3 and diverged grass species.</title>
        <authorList>
            <consortium name="The rice chromosome 3 sequencing consortium"/>
            <person name="Buell C.R."/>
            <person name="Yuan Q."/>
            <person name="Ouyang S."/>
            <person name="Liu J."/>
            <person name="Zhu W."/>
            <person name="Wang A."/>
            <person name="Maiti R."/>
            <person name="Haas B."/>
            <person name="Wortman J."/>
            <person name="Pertea M."/>
            <person name="Jones K.M."/>
            <person name="Kim M."/>
            <person name="Overton L."/>
            <person name="Tsitrin T."/>
            <person name="Fadrosh D."/>
            <person name="Bera J."/>
            <person name="Weaver B."/>
            <person name="Jin S."/>
            <person name="Johri S."/>
            <person name="Reardon M."/>
            <person name="Webb K."/>
            <person name="Hill J."/>
            <person name="Moffat K."/>
            <person name="Tallon L."/>
            <person name="Van Aken S."/>
            <person name="Lewis M."/>
            <person name="Utterback T."/>
            <person name="Feldblyum T."/>
            <person name="Zismann V."/>
            <person name="Iobst S."/>
            <person name="Hsiao J."/>
            <person name="de Vazeille A.R."/>
            <person name="Salzberg S.L."/>
            <person name="White O."/>
            <person name="Fraser C.M."/>
            <person name="Yu Y."/>
            <person name="Kim H."/>
            <person name="Rambo T."/>
            <person name="Currie J."/>
            <person name="Collura K."/>
            <person name="Kernodle-Thompson S."/>
            <person name="Wei F."/>
            <person name="Kudrna K."/>
            <person name="Ammiraju J.S.S."/>
            <person name="Luo M."/>
            <person name="Goicoechea J.L."/>
            <person name="Wing R.A."/>
            <person name="Henry D."/>
            <person name="Oates R."/>
            <person name="Palmer M."/>
            <person name="Pries G."/>
            <person name="Saski C."/>
            <person name="Simmons J."/>
            <person name="Soderlund C."/>
            <person name="Nelson W."/>
            <person name="de la Bastide M."/>
            <person name="Spiegel L."/>
            <person name="Nascimento L."/>
            <person name="Huang E."/>
            <person name="Preston R."/>
            <person name="Zutavern T."/>
            <person name="Palmer L."/>
            <person name="O'Shaughnessy A."/>
            <person name="Dike S."/>
            <person name="McCombie W.R."/>
            <person name="Minx P."/>
            <person name="Cordum H."/>
            <person name="Wilson R."/>
            <person name="Jin W."/>
            <person name="Lee H.R."/>
            <person name="Jiang J."/>
            <person name="Jackson S."/>
        </authorList>
    </citation>
    <scope>NUCLEOTIDE SEQUENCE [LARGE SCALE GENOMIC DNA]</scope>
    <source>
        <strain>cv. Nipponbare</strain>
    </source>
</reference>
<reference key="4">
    <citation type="journal article" date="2005" name="Nature">
        <title>The map-based sequence of the rice genome.</title>
        <authorList>
            <consortium name="International rice genome sequencing project (IRGSP)"/>
        </authorList>
    </citation>
    <scope>NUCLEOTIDE SEQUENCE [LARGE SCALE GENOMIC DNA]</scope>
    <source>
        <strain>cv. Nipponbare</strain>
    </source>
</reference>
<reference key="5">
    <citation type="journal article" date="2008" name="Nucleic Acids Res.">
        <title>The rice annotation project database (RAP-DB): 2008 update.</title>
        <authorList>
            <consortium name="The rice annotation project (RAP)"/>
        </authorList>
    </citation>
    <scope>GENOME REANNOTATION</scope>
    <source>
        <strain>cv. Nipponbare</strain>
    </source>
</reference>
<reference key="6">
    <citation type="journal article" date="2013" name="Rice">
        <title>Improvement of the Oryza sativa Nipponbare reference genome using next generation sequence and optical map data.</title>
        <authorList>
            <person name="Kawahara Y."/>
            <person name="de la Bastide M."/>
            <person name="Hamilton J.P."/>
            <person name="Kanamori H."/>
            <person name="McCombie W.R."/>
            <person name="Ouyang S."/>
            <person name="Schwartz D.C."/>
            <person name="Tanaka T."/>
            <person name="Wu J."/>
            <person name="Zhou S."/>
            <person name="Childs K.L."/>
            <person name="Davidson R.M."/>
            <person name="Lin H."/>
            <person name="Quesada-Ocampo L."/>
            <person name="Vaillancourt B."/>
            <person name="Sakai H."/>
            <person name="Lee S.S."/>
            <person name="Kim J."/>
            <person name="Numa H."/>
            <person name="Itoh T."/>
            <person name="Buell C.R."/>
            <person name="Matsumoto T."/>
        </authorList>
    </citation>
    <scope>GENOME REANNOTATION</scope>
    <source>
        <strain>cv. Nipponbare</strain>
    </source>
</reference>
<reference key="7">
    <citation type="journal article" date="2003" name="Plant Biotechnol. J.">
        <title>Reciprocal control of flowering time by OsSOC1 in transgenic Arabidopsis and by FLC in transgenic rice.</title>
        <authorList>
            <person name="Tadege M."/>
            <person name="Sheldon C.C."/>
            <person name="Helliwell C.A."/>
            <person name="Upadhyaya N.M."/>
            <person name="Dennis E.S."/>
            <person name="Peacock W.J."/>
        </authorList>
    </citation>
    <scope>FUNCTION</scope>
    <scope>TISSUE SPECIFICITY</scope>
    <scope>DEVELOPMENTAL STAGE</scope>
</reference>
<reference key="8">
    <citation type="journal article" date="2004" name="Plant J.">
        <title>Functional analyses of the flowering time gene OsMADS50, the putative SUPPRESSOR OF OVEREXPRESSION OF CO 1/AGAMOUS-LIKE 20 (SOC1/AGL20) ortholog in rice.</title>
        <authorList>
            <person name="Lee S."/>
            <person name="Kim J."/>
            <person name="Han J.-J."/>
            <person name="Han M.-J."/>
            <person name="An G."/>
        </authorList>
    </citation>
    <scope>FUNCTION</scope>
    <scope>DISRUPTION PHENOTYPE</scope>
    <scope>TISSUE SPECIFICITY</scope>
    <scope>DEVELOPMENTAL STAGE</scope>
</reference>
<evidence type="ECO:0000255" key="1">
    <source>
        <dbReference type="PROSITE-ProRule" id="PRU00251"/>
    </source>
</evidence>
<evidence type="ECO:0000255" key="2">
    <source>
        <dbReference type="PROSITE-ProRule" id="PRU00629"/>
    </source>
</evidence>
<evidence type="ECO:0000256" key="3">
    <source>
        <dbReference type="SAM" id="MobiDB-lite"/>
    </source>
</evidence>
<evidence type="ECO:0000269" key="4">
    <source>
    </source>
</evidence>
<evidence type="ECO:0000269" key="5">
    <source>
    </source>
</evidence>
<evidence type="ECO:0000303" key="6">
    <source ref="2"/>
</evidence>
<evidence type="ECO:0000305" key="7"/>
<comment type="function">
    <text evidence="4 5">Probable transcription factor active in flowering time control. May control internode elongation and promote floral transition phase. May act upstream of the floral regulators MADS1, MADS14, MADS15 and MADS18 in the floral induction pathway.</text>
</comment>
<comment type="subcellular location">
    <subcellularLocation>
        <location evidence="7">Nucleus</location>
    </subcellularLocation>
</comment>
<comment type="alternative products">
    <event type="alternative splicing"/>
    <isoform>
        <id>Q9XJ60-1</id>
        <name>1</name>
        <sequence type="displayed"/>
    </isoform>
    <isoform>
        <id>Q9XJ60-2</id>
        <name>2</name>
        <sequence type="described" ref="VSP_017787 VSP_017788"/>
    </isoform>
</comment>
<comment type="tissue specificity">
    <text evidence="4 5">Expressed in mature leaves and at low levels in roots and young panicles.</text>
</comment>
<comment type="developmental stage">
    <text evidence="4 5">Low expression in the young panicle continues to decline as the organ mature.</text>
</comment>
<comment type="disruption phenotype">
    <text evidence="4">Late-flowering phenotype and elongated internodes.</text>
</comment>
<comment type="miscellaneous">
    <text>Early flowering phenotype is observed in overexpressing plants.</text>
</comment>
<name>MAD50_ORYSJ</name>